<name>APT_LACDA</name>
<accession>Q1G9R7</accession>
<comment type="function">
    <text evidence="1">Catalyzes a salvage reaction resulting in the formation of AMP, that is energically less costly than de novo synthesis.</text>
</comment>
<comment type="catalytic activity">
    <reaction evidence="1">
        <text>AMP + diphosphate = 5-phospho-alpha-D-ribose 1-diphosphate + adenine</text>
        <dbReference type="Rhea" id="RHEA:16609"/>
        <dbReference type="ChEBI" id="CHEBI:16708"/>
        <dbReference type="ChEBI" id="CHEBI:33019"/>
        <dbReference type="ChEBI" id="CHEBI:58017"/>
        <dbReference type="ChEBI" id="CHEBI:456215"/>
        <dbReference type="EC" id="2.4.2.7"/>
    </reaction>
</comment>
<comment type="pathway">
    <text evidence="1">Purine metabolism; AMP biosynthesis via salvage pathway; AMP from adenine: step 1/1.</text>
</comment>
<comment type="subunit">
    <text evidence="1">Homodimer.</text>
</comment>
<comment type="subcellular location">
    <subcellularLocation>
        <location evidence="1">Cytoplasm</location>
    </subcellularLocation>
</comment>
<comment type="similarity">
    <text evidence="1">Belongs to the purine/pyrimidine phosphoribosyltransferase family.</text>
</comment>
<comment type="sequence caution" evidence="2">
    <conflict type="erroneous initiation">
        <sequence resource="EMBL-CDS" id="CAI98109"/>
    </conflict>
</comment>
<keyword id="KW-0963">Cytoplasm</keyword>
<keyword id="KW-0328">Glycosyltransferase</keyword>
<keyword id="KW-0660">Purine salvage</keyword>
<keyword id="KW-1185">Reference proteome</keyword>
<keyword id="KW-0808">Transferase</keyword>
<proteinExistence type="inferred from homology"/>
<gene>
    <name evidence="1" type="primary">apt</name>
    <name type="ordered locus">Ldb1308</name>
</gene>
<evidence type="ECO:0000255" key="1">
    <source>
        <dbReference type="HAMAP-Rule" id="MF_00004"/>
    </source>
</evidence>
<evidence type="ECO:0000305" key="2"/>
<reference key="1">
    <citation type="journal article" date="2006" name="Proc. Natl. Acad. Sci. U.S.A.">
        <title>The complete genome sequence of Lactobacillus bulgaricus reveals extensive and ongoing reductive evolution.</title>
        <authorList>
            <person name="van de Guchte M."/>
            <person name="Penaud S."/>
            <person name="Grimaldi C."/>
            <person name="Barbe V."/>
            <person name="Bryson K."/>
            <person name="Nicolas P."/>
            <person name="Robert C."/>
            <person name="Oztas S."/>
            <person name="Mangenot S."/>
            <person name="Couloux A."/>
            <person name="Loux V."/>
            <person name="Dervyn R."/>
            <person name="Bossy R."/>
            <person name="Bolotin A."/>
            <person name="Batto J.-M."/>
            <person name="Walunas T."/>
            <person name="Gibrat J.-F."/>
            <person name="Bessieres P."/>
            <person name="Weissenbach J."/>
            <person name="Ehrlich S.D."/>
            <person name="Maguin E."/>
        </authorList>
    </citation>
    <scope>NUCLEOTIDE SEQUENCE [LARGE SCALE GENOMIC DNA]</scope>
    <source>
        <strain>ATCC 11842 / DSM 20081 / BCRC 10696 / JCM 1002 / NBRC 13953 / NCIMB 11778 / NCTC 12712 / WDCM 00102 / Lb 14</strain>
    </source>
</reference>
<dbReference type="EC" id="2.4.2.7" evidence="1"/>
<dbReference type="EMBL" id="CR954253">
    <property type="protein sequence ID" value="CAI98109.1"/>
    <property type="status" value="ALT_INIT"/>
    <property type="molecule type" value="Genomic_DNA"/>
</dbReference>
<dbReference type="RefSeq" id="WP_003623930.1">
    <property type="nucleotide sequence ID" value="NZ_JQAV01000005.1"/>
</dbReference>
<dbReference type="SMR" id="Q1G9R7"/>
<dbReference type="STRING" id="390333.Ldb1308"/>
<dbReference type="KEGG" id="ldb:Ldb1308"/>
<dbReference type="PATRIC" id="fig|390333.13.peg.1599"/>
<dbReference type="eggNOG" id="COG0503">
    <property type="taxonomic scope" value="Bacteria"/>
</dbReference>
<dbReference type="HOGENOM" id="CLU_063339_3_0_9"/>
<dbReference type="BioCyc" id="LDEL390333:LDB_RS05590-MONOMER"/>
<dbReference type="UniPathway" id="UPA00588">
    <property type="reaction ID" value="UER00646"/>
</dbReference>
<dbReference type="Proteomes" id="UP000001259">
    <property type="component" value="Chromosome"/>
</dbReference>
<dbReference type="GO" id="GO:0005737">
    <property type="term" value="C:cytoplasm"/>
    <property type="evidence" value="ECO:0007669"/>
    <property type="project" value="UniProtKB-SubCell"/>
</dbReference>
<dbReference type="GO" id="GO:0002055">
    <property type="term" value="F:adenine binding"/>
    <property type="evidence" value="ECO:0007669"/>
    <property type="project" value="TreeGrafter"/>
</dbReference>
<dbReference type="GO" id="GO:0003999">
    <property type="term" value="F:adenine phosphoribosyltransferase activity"/>
    <property type="evidence" value="ECO:0007669"/>
    <property type="project" value="UniProtKB-UniRule"/>
</dbReference>
<dbReference type="GO" id="GO:0016208">
    <property type="term" value="F:AMP binding"/>
    <property type="evidence" value="ECO:0007669"/>
    <property type="project" value="TreeGrafter"/>
</dbReference>
<dbReference type="GO" id="GO:0006168">
    <property type="term" value="P:adenine salvage"/>
    <property type="evidence" value="ECO:0007669"/>
    <property type="project" value="InterPro"/>
</dbReference>
<dbReference type="GO" id="GO:0044209">
    <property type="term" value="P:AMP salvage"/>
    <property type="evidence" value="ECO:0007669"/>
    <property type="project" value="UniProtKB-UniRule"/>
</dbReference>
<dbReference type="GO" id="GO:0006166">
    <property type="term" value="P:purine ribonucleoside salvage"/>
    <property type="evidence" value="ECO:0007669"/>
    <property type="project" value="UniProtKB-KW"/>
</dbReference>
<dbReference type="CDD" id="cd06223">
    <property type="entry name" value="PRTases_typeI"/>
    <property type="match status" value="1"/>
</dbReference>
<dbReference type="FunFam" id="3.40.50.2020:FF:000004">
    <property type="entry name" value="Adenine phosphoribosyltransferase"/>
    <property type="match status" value="1"/>
</dbReference>
<dbReference type="Gene3D" id="3.40.50.2020">
    <property type="match status" value="1"/>
</dbReference>
<dbReference type="HAMAP" id="MF_00004">
    <property type="entry name" value="Aden_phosphoribosyltr"/>
    <property type="match status" value="1"/>
</dbReference>
<dbReference type="InterPro" id="IPR005764">
    <property type="entry name" value="Ade_phspho_trans"/>
</dbReference>
<dbReference type="InterPro" id="IPR000836">
    <property type="entry name" value="PRibTrfase_dom"/>
</dbReference>
<dbReference type="InterPro" id="IPR029057">
    <property type="entry name" value="PRTase-like"/>
</dbReference>
<dbReference type="InterPro" id="IPR050054">
    <property type="entry name" value="UPRTase/APRTase"/>
</dbReference>
<dbReference type="NCBIfam" id="TIGR01090">
    <property type="entry name" value="apt"/>
    <property type="match status" value="1"/>
</dbReference>
<dbReference type="NCBIfam" id="NF002633">
    <property type="entry name" value="PRK02304.1-2"/>
    <property type="match status" value="1"/>
</dbReference>
<dbReference type="NCBIfam" id="NF002634">
    <property type="entry name" value="PRK02304.1-3"/>
    <property type="match status" value="1"/>
</dbReference>
<dbReference type="NCBIfam" id="NF002636">
    <property type="entry name" value="PRK02304.1-5"/>
    <property type="match status" value="1"/>
</dbReference>
<dbReference type="PANTHER" id="PTHR32315">
    <property type="entry name" value="ADENINE PHOSPHORIBOSYLTRANSFERASE"/>
    <property type="match status" value="1"/>
</dbReference>
<dbReference type="PANTHER" id="PTHR32315:SF3">
    <property type="entry name" value="ADENINE PHOSPHORIBOSYLTRANSFERASE"/>
    <property type="match status" value="1"/>
</dbReference>
<dbReference type="Pfam" id="PF00156">
    <property type="entry name" value="Pribosyltran"/>
    <property type="match status" value="1"/>
</dbReference>
<dbReference type="SUPFAM" id="SSF53271">
    <property type="entry name" value="PRTase-like"/>
    <property type="match status" value="1"/>
</dbReference>
<dbReference type="PROSITE" id="PS00103">
    <property type="entry name" value="PUR_PYR_PR_TRANSFER"/>
    <property type="match status" value="1"/>
</dbReference>
<organism>
    <name type="scientific">Lactobacillus delbrueckii subsp. bulgaricus (strain ATCC 11842 / DSM 20081 / BCRC 10696 / JCM 1002 / NBRC 13953 / NCIMB 11778 / NCTC 12712 / WDCM 00102 / Lb 14)</name>
    <dbReference type="NCBI Taxonomy" id="390333"/>
    <lineage>
        <taxon>Bacteria</taxon>
        <taxon>Bacillati</taxon>
        <taxon>Bacillota</taxon>
        <taxon>Bacilli</taxon>
        <taxon>Lactobacillales</taxon>
        <taxon>Lactobacillaceae</taxon>
        <taxon>Lactobacillus</taxon>
    </lineage>
</organism>
<protein>
    <recommendedName>
        <fullName evidence="1">Adenine phosphoribosyltransferase</fullName>
        <shortName evidence="1">APRT</shortName>
        <ecNumber evidence="1">2.4.2.7</ecNumber>
    </recommendedName>
</protein>
<sequence>MSIDFKKYIASVKDFPNEGIIFRDITPILQDGEAFAAATHEIAEYAKSRQADVIVGPEARGFLVGTPVAIELGIGFVPARKPHKLPREVEAAAYDLEYGSNVLEMHKDAIKPGQRVVICDDLMATAGTMHATKELIERLGGKVVGAAFYIELTDLKGREKFPDVDIFSLVQYTGA</sequence>
<feature type="chain" id="PRO_0000321366" description="Adenine phosphoribosyltransferase">
    <location>
        <begin position="1"/>
        <end position="175"/>
    </location>
</feature>